<proteinExistence type="inferred from homology"/>
<gene>
    <name evidence="1" type="primary">gcvT</name>
    <name type="ordered locus">CLJ_B0768</name>
</gene>
<name>GCST_CLOB6</name>
<accession>C3L1M5</accession>
<comment type="function">
    <text evidence="1">The glycine cleavage system catalyzes the degradation of glycine.</text>
</comment>
<comment type="catalytic activity">
    <reaction evidence="1">
        <text>N(6)-[(R)-S(8)-aminomethyldihydrolipoyl]-L-lysyl-[protein] + (6S)-5,6,7,8-tetrahydrofolate = N(6)-[(R)-dihydrolipoyl]-L-lysyl-[protein] + (6R)-5,10-methylene-5,6,7,8-tetrahydrofolate + NH4(+)</text>
        <dbReference type="Rhea" id="RHEA:16945"/>
        <dbReference type="Rhea" id="RHEA-COMP:10475"/>
        <dbReference type="Rhea" id="RHEA-COMP:10492"/>
        <dbReference type="ChEBI" id="CHEBI:15636"/>
        <dbReference type="ChEBI" id="CHEBI:28938"/>
        <dbReference type="ChEBI" id="CHEBI:57453"/>
        <dbReference type="ChEBI" id="CHEBI:83100"/>
        <dbReference type="ChEBI" id="CHEBI:83143"/>
        <dbReference type="EC" id="2.1.2.10"/>
    </reaction>
</comment>
<comment type="subunit">
    <text evidence="1">The glycine cleavage system is composed of four proteins: P, T, L and H.</text>
</comment>
<comment type="similarity">
    <text evidence="1">Belongs to the GcvT family.</text>
</comment>
<sequence>MEGLKVTPLRGVYEEYGGKIVDFAGYELPTQFKGFLHEHHTVREKAGLFDVSHMGEATVKGKDAQKFVQYLMTNDINVLKDNEVLYTFMCNEDGGVIDDLLVYKFAEDEFFLVINASNKDKDVKWILDHKGDFDVEIVDVSDSIAQLAFQGPLAEEILQKIVDVDLQEIKFFKLKRDVLVNGKKCLVSRTGYTGEDGFEIYCKPEDAKGLWHAILNAGKEEGAQPIGLGARDTLRFEASLLLYGNEMDETITPLEVGMGFFVKLKVEEDFIGKDALIKQKAEGVTRKLVGFELLDKGIPRHGYEVIKDGKVIGHVTTGYKSPTLNKAIGLALVEEQYSKIGTEFNIKVRKKELKAVAIDKRFYTKKTKTK</sequence>
<protein>
    <recommendedName>
        <fullName evidence="1">Aminomethyltransferase</fullName>
        <ecNumber evidence="1">2.1.2.10</ecNumber>
    </recommendedName>
    <alternativeName>
        <fullName evidence="1">Glycine cleavage system T protein</fullName>
    </alternativeName>
</protein>
<feature type="chain" id="PRO_1000204633" description="Aminomethyltransferase">
    <location>
        <begin position="1"/>
        <end position="370"/>
    </location>
</feature>
<reference key="1">
    <citation type="submission" date="2008-05" db="EMBL/GenBank/DDBJ databases">
        <title>Genome sequence of Clostridium botulinum Ba4 strain 657.</title>
        <authorList>
            <person name="Shrivastava S."/>
            <person name="Brown J.L."/>
            <person name="Bruce D."/>
            <person name="Detter C."/>
            <person name="Munk C."/>
            <person name="Smith L.A."/>
            <person name="Smith T.J."/>
            <person name="Sutton G."/>
            <person name="Brettin T.S."/>
        </authorList>
    </citation>
    <scope>NUCLEOTIDE SEQUENCE [LARGE SCALE GENOMIC DNA]</scope>
    <source>
        <strain>657 / Type Ba4</strain>
    </source>
</reference>
<evidence type="ECO:0000255" key="1">
    <source>
        <dbReference type="HAMAP-Rule" id="MF_00259"/>
    </source>
</evidence>
<keyword id="KW-0032">Aminotransferase</keyword>
<keyword id="KW-0808">Transferase</keyword>
<dbReference type="EC" id="2.1.2.10" evidence="1"/>
<dbReference type="EMBL" id="CP001083">
    <property type="protein sequence ID" value="ACQ52479.1"/>
    <property type="molecule type" value="Genomic_DNA"/>
</dbReference>
<dbReference type="RefSeq" id="WP_003361486.1">
    <property type="nucleotide sequence ID" value="NC_012658.1"/>
</dbReference>
<dbReference type="SMR" id="C3L1M5"/>
<dbReference type="KEGG" id="cbi:CLJ_B0768"/>
<dbReference type="HOGENOM" id="CLU_007884_10_2_9"/>
<dbReference type="Proteomes" id="UP000002333">
    <property type="component" value="Chromosome"/>
</dbReference>
<dbReference type="GO" id="GO:0005829">
    <property type="term" value="C:cytosol"/>
    <property type="evidence" value="ECO:0007669"/>
    <property type="project" value="TreeGrafter"/>
</dbReference>
<dbReference type="GO" id="GO:0005960">
    <property type="term" value="C:glycine cleavage complex"/>
    <property type="evidence" value="ECO:0007669"/>
    <property type="project" value="InterPro"/>
</dbReference>
<dbReference type="GO" id="GO:0004047">
    <property type="term" value="F:aminomethyltransferase activity"/>
    <property type="evidence" value="ECO:0007669"/>
    <property type="project" value="UniProtKB-UniRule"/>
</dbReference>
<dbReference type="GO" id="GO:0008483">
    <property type="term" value="F:transaminase activity"/>
    <property type="evidence" value="ECO:0007669"/>
    <property type="project" value="UniProtKB-KW"/>
</dbReference>
<dbReference type="GO" id="GO:0019464">
    <property type="term" value="P:glycine decarboxylation via glycine cleavage system"/>
    <property type="evidence" value="ECO:0007669"/>
    <property type="project" value="UniProtKB-UniRule"/>
</dbReference>
<dbReference type="FunFam" id="2.40.30.110:FF:000014">
    <property type="entry name" value="Aminomethyltransferase"/>
    <property type="match status" value="1"/>
</dbReference>
<dbReference type="FunFam" id="3.30.70.1400:FF:000001">
    <property type="entry name" value="Aminomethyltransferase"/>
    <property type="match status" value="1"/>
</dbReference>
<dbReference type="FunFam" id="4.10.1250.10:FF:000001">
    <property type="entry name" value="Aminomethyltransferase"/>
    <property type="match status" value="1"/>
</dbReference>
<dbReference type="Gene3D" id="2.40.30.110">
    <property type="entry name" value="Aminomethyltransferase beta-barrel domains"/>
    <property type="match status" value="1"/>
</dbReference>
<dbReference type="Gene3D" id="3.30.70.1400">
    <property type="entry name" value="Aminomethyltransferase beta-barrel domains"/>
    <property type="match status" value="1"/>
</dbReference>
<dbReference type="Gene3D" id="4.10.1250.10">
    <property type="entry name" value="Aminomethyltransferase fragment"/>
    <property type="match status" value="1"/>
</dbReference>
<dbReference type="Gene3D" id="3.30.1360.120">
    <property type="entry name" value="Probable tRNA modification gtpase trme, domain 1"/>
    <property type="match status" value="1"/>
</dbReference>
<dbReference type="HAMAP" id="MF_00259">
    <property type="entry name" value="GcvT"/>
    <property type="match status" value="1"/>
</dbReference>
<dbReference type="InterPro" id="IPR006223">
    <property type="entry name" value="GCS_T"/>
</dbReference>
<dbReference type="InterPro" id="IPR022903">
    <property type="entry name" value="GCS_T_bac"/>
</dbReference>
<dbReference type="InterPro" id="IPR013977">
    <property type="entry name" value="GCST_C"/>
</dbReference>
<dbReference type="InterPro" id="IPR006222">
    <property type="entry name" value="GCV_T_N"/>
</dbReference>
<dbReference type="InterPro" id="IPR028896">
    <property type="entry name" value="GcvT/YgfZ/DmdA"/>
</dbReference>
<dbReference type="InterPro" id="IPR029043">
    <property type="entry name" value="GcvT/YgfZ_C"/>
</dbReference>
<dbReference type="InterPro" id="IPR027266">
    <property type="entry name" value="TrmE/GcvT_dom1"/>
</dbReference>
<dbReference type="NCBIfam" id="TIGR00528">
    <property type="entry name" value="gcvT"/>
    <property type="match status" value="1"/>
</dbReference>
<dbReference type="NCBIfam" id="NF001567">
    <property type="entry name" value="PRK00389.1"/>
    <property type="match status" value="1"/>
</dbReference>
<dbReference type="PANTHER" id="PTHR43757">
    <property type="entry name" value="AMINOMETHYLTRANSFERASE"/>
    <property type="match status" value="1"/>
</dbReference>
<dbReference type="PANTHER" id="PTHR43757:SF2">
    <property type="entry name" value="AMINOMETHYLTRANSFERASE, MITOCHONDRIAL"/>
    <property type="match status" value="1"/>
</dbReference>
<dbReference type="Pfam" id="PF01571">
    <property type="entry name" value="GCV_T"/>
    <property type="match status" value="1"/>
</dbReference>
<dbReference type="Pfam" id="PF08669">
    <property type="entry name" value="GCV_T_C"/>
    <property type="match status" value="1"/>
</dbReference>
<dbReference type="PIRSF" id="PIRSF006487">
    <property type="entry name" value="GcvT"/>
    <property type="match status" value="1"/>
</dbReference>
<dbReference type="SUPFAM" id="SSF101790">
    <property type="entry name" value="Aminomethyltransferase beta-barrel domain"/>
    <property type="match status" value="1"/>
</dbReference>
<dbReference type="SUPFAM" id="SSF103025">
    <property type="entry name" value="Folate-binding domain"/>
    <property type="match status" value="1"/>
</dbReference>
<organism>
    <name type="scientific">Clostridium botulinum (strain 657 / Type Ba4)</name>
    <dbReference type="NCBI Taxonomy" id="515621"/>
    <lineage>
        <taxon>Bacteria</taxon>
        <taxon>Bacillati</taxon>
        <taxon>Bacillota</taxon>
        <taxon>Clostridia</taxon>
        <taxon>Eubacteriales</taxon>
        <taxon>Clostridiaceae</taxon>
        <taxon>Clostridium</taxon>
    </lineage>
</organism>